<dbReference type="EC" id="4.4.1.21" evidence="1"/>
<dbReference type="EMBL" id="AP009484">
    <property type="protein sequence ID" value="BAH18498.1"/>
    <property type="molecule type" value="Genomic_DNA"/>
</dbReference>
<dbReference type="RefSeq" id="WP_015912290.1">
    <property type="nucleotide sequence ID" value="NC_011999.1"/>
</dbReference>
<dbReference type="SMR" id="B9E8I0"/>
<dbReference type="STRING" id="458233.MCCL_1791"/>
<dbReference type="KEGG" id="mcl:MCCL_1791"/>
<dbReference type="eggNOG" id="COG1854">
    <property type="taxonomic scope" value="Bacteria"/>
</dbReference>
<dbReference type="HOGENOM" id="CLU_107531_0_0_9"/>
<dbReference type="OrthoDB" id="9788129at2"/>
<dbReference type="Proteomes" id="UP000001383">
    <property type="component" value="Chromosome"/>
</dbReference>
<dbReference type="GO" id="GO:0005506">
    <property type="term" value="F:iron ion binding"/>
    <property type="evidence" value="ECO:0007669"/>
    <property type="project" value="InterPro"/>
</dbReference>
<dbReference type="GO" id="GO:0043768">
    <property type="term" value="F:S-ribosylhomocysteine lyase activity"/>
    <property type="evidence" value="ECO:0007669"/>
    <property type="project" value="UniProtKB-UniRule"/>
</dbReference>
<dbReference type="GO" id="GO:0009372">
    <property type="term" value="P:quorum sensing"/>
    <property type="evidence" value="ECO:0007669"/>
    <property type="project" value="UniProtKB-UniRule"/>
</dbReference>
<dbReference type="Gene3D" id="3.30.1360.80">
    <property type="entry name" value="S-ribosylhomocysteinase (LuxS)"/>
    <property type="match status" value="1"/>
</dbReference>
<dbReference type="HAMAP" id="MF_00091">
    <property type="entry name" value="LuxS"/>
    <property type="match status" value="1"/>
</dbReference>
<dbReference type="InterPro" id="IPR037005">
    <property type="entry name" value="LuxS_sf"/>
</dbReference>
<dbReference type="InterPro" id="IPR011249">
    <property type="entry name" value="Metalloenz_LuxS/M16"/>
</dbReference>
<dbReference type="InterPro" id="IPR003815">
    <property type="entry name" value="S-ribosylhomocysteinase"/>
</dbReference>
<dbReference type="NCBIfam" id="NF002604">
    <property type="entry name" value="PRK02260.1-4"/>
    <property type="match status" value="1"/>
</dbReference>
<dbReference type="PANTHER" id="PTHR35799">
    <property type="entry name" value="S-RIBOSYLHOMOCYSTEINE LYASE"/>
    <property type="match status" value="1"/>
</dbReference>
<dbReference type="PANTHER" id="PTHR35799:SF1">
    <property type="entry name" value="S-RIBOSYLHOMOCYSTEINE LYASE"/>
    <property type="match status" value="1"/>
</dbReference>
<dbReference type="Pfam" id="PF02664">
    <property type="entry name" value="LuxS"/>
    <property type="match status" value="1"/>
</dbReference>
<dbReference type="PIRSF" id="PIRSF006160">
    <property type="entry name" value="AI2"/>
    <property type="match status" value="1"/>
</dbReference>
<dbReference type="PRINTS" id="PR01487">
    <property type="entry name" value="LUXSPROTEIN"/>
</dbReference>
<dbReference type="SUPFAM" id="SSF63411">
    <property type="entry name" value="LuxS/MPP-like metallohydrolase"/>
    <property type="match status" value="1"/>
</dbReference>
<protein>
    <recommendedName>
        <fullName evidence="1">S-ribosylhomocysteine lyase</fullName>
        <ecNumber evidence="1">4.4.1.21</ecNumber>
    </recommendedName>
    <alternativeName>
        <fullName evidence="1">AI-2 synthesis protein</fullName>
    </alternativeName>
    <alternativeName>
        <fullName evidence="1">Autoinducer-2 production protein LuxS</fullName>
    </alternativeName>
</protein>
<keyword id="KW-0071">Autoinducer synthesis</keyword>
<keyword id="KW-0408">Iron</keyword>
<keyword id="KW-0456">Lyase</keyword>
<keyword id="KW-0479">Metal-binding</keyword>
<keyword id="KW-0673">Quorum sensing</keyword>
<keyword id="KW-1185">Reference proteome</keyword>
<sequence length="161" mass="18081">MTKKMNVESFNLDHTIVDAPFVRLAGIKEGINGDVIHKYDIRFKQPNKEHMEMPALHSLEHLMAENIRNHTDKVVDISPMGCQTGFYVSLINHDNYEDVLAILEKTLNDVLAADEVPACNEVQCGWAASHSLEGAKAIAQEMLSKKDSWHVIYQPGKEPQA</sequence>
<name>LUXS_MACCJ</name>
<organism>
    <name type="scientific">Macrococcus caseolyticus (strain JCSC5402)</name>
    <name type="common">Macrococcoides caseolyticum</name>
    <dbReference type="NCBI Taxonomy" id="458233"/>
    <lineage>
        <taxon>Bacteria</taxon>
        <taxon>Bacillati</taxon>
        <taxon>Bacillota</taxon>
        <taxon>Bacilli</taxon>
        <taxon>Bacillales</taxon>
        <taxon>Staphylococcaceae</taxon>
        <taxon>Macrococcoides</taxon>
    </lineage>
</organism>
<feature type="chain" id="PRO_1000191035" description="S-ribosylhomocysteine lyase">
    <location>
        <begin position="1"/>
        <end position="161"/>
    </location>
</feature>
<feature type="binding site" evidence="1">
    <location>
        <position position="57"/>
    </location>
    <ligand>
        <name>Fe cation</name>
        <dbReference type="ChEBI" id="CHEBI:24875"/>
    </ligand>
</feature>
<feature type="binding site" evidence="1">
    <location>
        <position position="61"/>
    </location>
    <ligand>
        <name>Fe cation</name>
        <dbReference type="ChEBI" id="CHEBI:24875"/>
    </ligand>
</feature>
<feature type="binding site" evidence="1">
    <location>
        <position position="124"/>
    </location>
    <ligand>
        <name>Fe cation</name>
        <dbReference type="ChEBI" id="CHEBI:24875"/>
    </ligand>
</feature>
<proteinExistence type="inferred from homology"/>
<accession>B9E8I0</accession>
<reference key="1">
    <citation type="journal article" date="2009" name="J. Bacteriol.">
        <title>Complete genome sequence of Macrococcus caseolyticus strain JCSCS5402, reflecting the ancestral genome of the human-pathogenic staphylococci.</title>
        <authorList>
            <person name="Baba T."/>
            <person name="Kuwahara-Arai K."/>
            <person name="Uchiyama I."/>
            <person name="Takeuchi F."/>
            <person name="Ito T."/>
            <person name="Hiramatsu K."/>
        </authorList>
    </citation>
    <scope>NUCLEOTIDE SEQUENCE [LARGE SCALE GENOMIC DNA]</scope>
    <source>
        <strain>JCSC5402</strain>
    </source>
</reference>
<comment type="function">
    <text evidence="1">Involved in the synthesis of autoinducer 2 (AI-2) which is secreted by bacteria and is used to communicate both the cell density and the metabolic potential of the environment. The regulation of gene expression in response to changes in cell density is called quorum sensing. Catalyzes the transformation of S-ribosylhomocysteine (RHC) to homocysteine (HC) and 4,5-dihydroxy-2,3-pentadione (DPD).</text>
</comment>
<comment type="catalytic activity">
    <reaction evidence="1">
        <text>S-(5-deoxy-D-ribos-5-yl)-L-homocysteine = (S)-4,5-dihydroxypentane-2,3-dione + L-homocysteine</text>
        <dbReference type="Rhea" id="RHEA:17753"/>
        <dbReference type="ChEBI" id="CHEBI:29484"/>
        <dbReference type="ChEBI" id="CHEBI:58195"/>
        <dbReference type="ChEBI" id="CHEBI:58199"/>
        <dbReference type="EC" id="4.4.1.21"/>
    </reaction>
</comment>
<comment type="cofactor">
    <cofactor evidence="1">
        <name>Fe cation</name>
        <dbReference type="ChEBI" id="CHEBI:24875"/>
    </cofactor>
    <text evidence="1">Binds 1 Fe cation per subunit.</text>
</comment>
<comment type="subunit">
    <text evidence="1">Homodimer.</text>
</comment>
<comment type="similarity">
    <text evidence="1">Belongs to the LuxS family.</text>
</comment>
<gene>
    <name evidence="1" type="primary">luxS</name>
    <name type="ordered locus">MCCL_1791</name>
</gene>
<evidence type="ECO:0000255" key="1">
    <source>
        <dbReference type="HAMAP-Rule" id="MF_00091"/>
    </source>
</evidence>